<evidence type="ECO:0000255" key="1">
    <source>
        <dbReference type="HAMAP-Rule" id="MF_01810"/>
    </source>
</evidence>
<evidence type="ECO:0000256" key="2">
    <source>
        <dbReference type="SAM" id="MobiDB-lite"/>
    </source>
</evidence>
<protein>
    <recommendedName>
        <fullName evidence="1">Membrane protein insertase YidC</fullName>
    </recommendedName>
    <alternativeName>
        <fullName evidence="1">Foldase YidC</fullName>
    </alternativeName>
    <alternativeName>
        <fullName evidence="1">Membrane integrase YidC</fullName>
    </alternativeName>
    <alternativeName>
        <fullName evidence="1">Membrane protein YidC</fullName>
    </alternativeName>
</protein>
<reference key="1">
    <citation type="journal article" date="2011" name="J. Bacteriol.">
        <title>Comparative genomics of 28 Salmonella enterica isolates: evidence for CRISPR-mediated adaptive sublineage evolution.</title>
        <authorList>
            <person name="Fricke W.F."/>
            <person name="Mammel M.K."/>
            <person name="McDermott P.F."/>
            <person name="Tartera C."/>
            <person name="White D.G."/>
            <person name="Leclerc J.E."/>
            <person name="Ravel J."/>
            <person name="Cebula T.A."/>
        </authorList>
    </citation>
    <scope>NUCLEOTIDE SEQUENCE [LARGE SCALE GENOMIC DNA]</scope>
    <source>
        <strain>SL476</strain>
    </source>
</reference>
<sequence length="548" mass="61664">MDSQRNLLVIALLFVSFMIWQAWEQDKNPQPQTQQTTQTTTTAAGSAADQGVPASGQGKMITVKTDVLDLTINTRGGDVEQALLPAYPKELGSNEPFQLLETTPQFIYQAQSGLTGRDGPDNPANGPRPLYNVEKEAFVLADGQNELQVPMTYTDAAGNTFTKTFVFKRGDYAVNVNYSVQNAGEKPLEVSTFGQLKQSVNLPPHRDTGSSNFALHTFRGAAYSTPDEKYEKYKFDTIADNENLNVSSKGGWVAMLQQYFATAWIPRNDGTNNFYTANLGNGIVAIGYKAQPVLVQPGQTGAMTSTLWVGPEIQDKMAAVAPHLDLTVDYGWLWFISQPLFKLLKWIHSFVGNWGFSIIIITFIVRGIMYPLTKAQYTSMAKMRMLQPKIQAMRERLGDDKQRQSQEMMALYKAEKVNPLGGCFPLIIQMPIFLALYYMLMGSIELRHAPFALWIHDLSAQDPYYILPILMGVTMFFIQKMSPTTVTDPMQQKIMTFMPVIFTVFFLWFPSGLVLYYIVSNLVTIIQQQLIYRSLEKRGLHSREKKKS</sequence>
<accession>B4TAV2</accession>
<keyword id="KW-0997">Cell inner membrane</keyword>
<keyword id="KW-1003">Cell membrane</keyword>
<keyword id="KW-0143">Chaperone</keyword>
<keyword id="KW-0472">Membrane</keyword>
<keyword id="KW-0653">Protein transport</keyword>
<keyword id="KW-0812">Transmembrane</keyword>
<keyword id="KW-1133">Transmembrane helix</keyword>
<keyword id="KW-0813">Transport</keyword>
<organism>
    <name type="scientific">Salmonella heidelberg (strain SL476)</name>
    <dbReference type="NCBI Taxonomy" id="454169"/>
    <lineage>
        <taxon>Bacteria</taxon>
        <taxon>Pseudomonadati</taxon>
        <taxon>Pseudomonadota</taxon>
        <taxon>Gammaproteobacteria</taxon>
        <taxon>Enterobacterales</taxon>
        <taxon>Enterobacteriaceae</taxon>
        <taxon>Salmonella</taxon>
    </lineage>
</organism>
<name>YIDC_SALHS</name>
<feature type="chain" id="PRO_1000187700" description="Membrane protein insertase YidC">
    <location>
        <begin position="1"/>
        <end position="548"/>
    </location>
</feature>
<feature type="transmembrane region" description="Helical" evidence="1">
    <location>
        <begin position="6"/>
        <end position="26"/>
    </location>
</feature>
<feature type="transmembrane region" description="Helical" evidence="1">
    <location>
        <begin position="350"/>
        <end position="370"/>
    </location>
</feature>
<feature type="transmembrane region" description="Helical" evidence="1">
    <location>
        <begin position="424"/>
        <end position="444"/>
    </location>
</feature>
<feature type="transmembrane region" description="Helical" evidence="1">
    <location>
        <begin position="458"/>
        <end position="478"/>
    </location>
</feature>
<feature type="transmembrane region" description="Helical" evidence="1">
    <location>
        <begin position="499"/>
        <end position="519"/>
    </location>
</feature>
<feature type="region of interest" description="Disordered" evidence="2">
    <location>
        <begin position="28"/>
        <end position="56"/>
    </location>
</feature>
<feature type="compositionally biased region" description="Low complexity" evidence="2">
    <location>
        <begin position="29"/>
        <end position="42"/>
    </location>
</feature>
<comment type="function">
    <text evidence="1">Required for the insertion and/or proper folding and/or complex formation of integral membrane proteins into the membrane. Involved in integration of membrane proteins that insert both dependently and independently of the Sec translocase complex, as well as at least some lipoproteins. Aids folding of multispanning membrane proteins.</text>
</comment>
<comment type="subunit">
    <text evidence="1">Interacts with the Sec translocase complex via SecD. Specifically interacts with transmembrane segments of nascent integral membrane proteins during membrane integration.</text>
</comment>
<comment type="subcellular location">
    <subcellularLocation>
        <location evidence="1">Cell inner membrane</location>
        <topology evidence="1">Multi-pass membrane protein</topology>
    </subcellularLocation>
</comment>
<comment type="similarity">
    <text evidence="1">Belongs to the OXA1/ALB3/YidC family. Type 1 subfamily.</text>
</comment>
<proteinExistence type="inferred from homology"/>
<dbReference type="EMBL" id="CP001120">
    <property type="protein sequence ID" value="ACF66527.1"/>
    <property type="molecule type" value="Genomic_DNA"/>
</dbReference>
<dbReference type="RefSeq" id="WP_000378282.1">
    <property type="nucleotide sequence ID" value="NC_011083.1"/>
</dbReference>
<dbReference type="SMR" id="B4TAV2"/>
<dbReference type="KEGG" id="seh:SeHA_C4176"/>
<dbReference type="HOGENOM" id="CLU_016535_3_0_6"/>
<dbReference type="Proteomes" id="UP000001866">
    <property type="component" value="Chromosome"/>
</dbReference>
<dbReference type="GO" id="GO:0005886">
    <property type="term" value="C:plasma membrane"/>
    <property type="evidence" value="ECO:0007669"/>
    <property type="project" value="UniProtKB-SubCell"/>
</dbReference>
<dbReference type="GO" id="GO:0032977">
    <property type="term" value="F:membrane insertase activity"/>
    <property type="evidence" value="ECO:0007669"/>
    <property type="project" value="InterPro"/>
</dbReference>
<dbReference type="GO" id="GO:0051205">
    <property type="term" value="P:protein insertion into membrane"/>
    <property type="evidence" value="ECO:0007669"/>
    <property type="project" value="TreeGrafter"/>
</dbReference>
<dbReference type="GO" id="GO:0015031">
    <property type="term" value="P:protein transport"/>
    <property type="evidence" value="ECO:0007669"/>
    <property type="project" value="UniProtKB-KW"/>
</dbReference>
<dbReference type="CDD" id="cd20070">
    <property type="entry name" value="5TM_YidC_Alb3"/>
    <property type="match status" value="1"/>
</dbReference>
<dbReference type="CDD" id="cd19961">
    <property type="entry name" value="EcYidC-like_peri"/>
    <property type="match status" value="1"/>
</dbReference>
<dbReference type="FunFam" id="2.70.98.90:FF:000001">
    <property type="entry name" value="Membrane protein insertase YidC"/>
    <property type="match status" value="1"/>
</dbReference>
<dbReference type="Gene3D" id="2.70.98.90">
    <property type="match status" value="1"/>
</dbReference>
<dbReference type="HAMAP" id="MF_01810">
    <property type="entry name" value="YidC_type1"/>
    <property type="match status" value="1"/>
</dbReference>
<dbReference type="InterPro" id="IPR019998">
    <property type="entry name" value="Membr_insert_YidC"/>
</dbReference>
<dbReference type="InterPro" id="IPR028053">
    <property type="entry name" value="Membr_insert_YidC_N"/>
</dbReference>
<dbReference type="InterPro" id="IPR001708">
    <property type="entry name" value="YidC/ALB3/OXA1/COX18"/>
</dbReference>
<dbReference type="InterPro" id="IPR028055">
    <property type="entry name" value="YidC/Oxa/ALB_C"/>
</dbReference>
<dbReference type="InterPro" id="IPR047196">
    <property type="entry name" value="YidC_ALB_C"/>
</dbReference>
<dbReference type="InterPro" id="IPR038221">
    <property type="entry name" value="YidC_periplasmic_sf"/>
</dbReference>
<dbReference type="NCBIfam" id="NF002351">
    <property type="entry name" value="PRK01318.1-1"/>
    <property type="match status" value="1"/>
</dbReference>
<dbReference type="NCBIfam" id="NF002352">
    <property type="entry name" value="PRK01318.1-3"/>
    <property type="match status" value="1"/>
</dbReference>
<dbReference type="NCBIfam" id="TIGR03593">
    <property type="entry name" value="yidC_nterm"/>
    <property type="match status" value="1"/>
</dbReference>
<dbReference type="NCBIfam" id="TIGR03592">
    <property type="entry name" value="yidC_oxa1_cterm"/>
    <property type="match status" value="1"/>
</dbReference>
<dbReference type="PANTHER" id="PTHR12428:SF65">
    <property type="entry name" value="CYTOCHROME C OXIDASE ASSEMBLY PROTEIN COX18, MITOCHONDRIAL"/>
    <property type="match status" value="1"/>
</dbReference>
<dbReference type="PANTHER" id="PTHR12428">
    <property type="entry name" value="OXA1"/>
    <property type="match status" value="1"/>
</dbReference>
<dbReference type="Pfam" id="PF02096">
    <property type="entry name" value="60KD_IMP"/>
    <property type="match status" value="1"/>
</dbReference>
<dbReference type="Pfam" id="PF14849">
    <property type="entry name" value="YidC_periplas"/>
    <property type="match status" value="1"/>
</dbReference>
<dbReference type="PRINTS" id="PR00701">
    <property type="entry name" value="60KDINNERMP"/>
</dbReference>
<dbReference type="PRINTS" id="PR01900">
    <property type="entry name" value="YIDCPROTEIN"/>
</dbReference>
<gene>
    <name evidence="1" type="primary">yidC</name>
    <name type="ordered locus">SeHA_C4176</name>
</gene>